<keyword id="KW-0002">3D-structure</keyword>
<keyword id="KW-0963">Cytoplasm</keyword>
<keyword id="KW-0539">Nucleus</keyword>
<keyword id="KW-1185">Reference proteome</keyword>
<keyword id="KW-0687">Ribonucleoprotein</keyword>
<keyword id="KW-0689">Ribosomal protein</keyword>
<evidence type="ECO:0000250" key="1">
    <source>
        <dbReference type="UniProtKB" id="P07280"/>
    </source>
</evidence>
<evidence type="ECO:0000256" key="2">
    <source>
        <dbReference type="SAM" id="MobiDB-lite"/>
    </source>
</evidence>
<evidence type="ECO:0000269" key="3">
    <source>
    </source>
</evidence>
<evidence type="ECO:0000305" key="4"/>
<comment type="function">
    <text evidence="1">Component of the ribosome, a large ribonucleoprotein complex responsible for the synthesis of proteins in the cell. The small ribosomal subunit (SSU) binds messenger RNAs (mRNAs) and translates the encoded message by selecting cognate aminoacyl-transfer RNA (tRNA) molecules. The large subunit (LSU) contains the ribosomal catalytic site termed the peptidyl transferase center (PTC), which catalyzes the formation of peptide bonds, thereby polymerizing the amino acids delivered by tRNAs into a polypeptide chain. The nascent polypeptides leave the ribosome through a tunnel in the LSU and interact with protein factors that function in enzymatic processing, targeting, and the membrane insertion of nascent chains at the exit of the ribosomal tunnel. eS19 is required for proper maturation of the small (40S) ribosomal subunit. Binds to 40S pre-ribosomal particles, probably required after association of NOC4 but before association of ENP1, TSR1 and RIO2 with 20/21S pre-rRNA.</text>
</comment>
<comment type="subunit">
    <text evidence="1">Component of the small ribosomal subunit (SSU). Mature yeast ribosomes consist of a small (40S) and a large (60S) subunit. The 40S small subunit contains 1 molecule of ribosomal RNA (18S rRNA) and at least 33 different proteins. The large 60S subunit contains 3 rRNA molecules (25S, 5.8S and 5S rRNA) and at least 46 different proteins.</text>
</comment>
<comment type="subcellular location">
    <subcellularLocation>
        <location evidence="3">Cytoplasm</location>
    </subcellularLocation>
    <subcellularLocation>
        <location evidence="3">Nucleus</location>
    </subcellularLocation>
    <subcellularLocation>
        <location evidence="3">Nucleus</location>
        <location evidence="3">Nucleolus</location>
    </subcellularLocation>
</comment>
<comment type="miscellaneous">
    <text>There are 2 genes for eS19 in S.pombe.</text>
</comment>
<comment type="similarity">
    <text evidence="4">Belongs to the eukaryotic ribosomal protein eS19 family.</text>
</comment>
<name>RS19A_SCHPO</name>
<reference key="1">
    <citation type="journal article" date="2002" name="Nature">
        <title>The genome sequence of Schizosaccharomyces pombe.</title>
        <authorList>
            <person name="Wood V."/>
            <person name="Gwilliam R."/>
            <person name="Rajandream M.A."/>
            <person name="Lyne M.H."/>
            <person name="Lyne R."/>
            <person name="Stewart A."/>
            <person name="Sgouros J.G."/>
            <person name="Peat N."/>
            <person name="Hayles J."/>
            <person name="Baker S.G."/>
            <person name="Basham D."/>
            <person name="Bowman S."/>
            <person name="Brooks K."/>
            <person name="Brown D."/>
            <person name="Brown S."/>
            <person name="Chillingworth T."/>
            <person name="Churcher C.M."/>
            <person name="Collins M."/>
            <person name="Connor R."/>
            <person name="Cronin A."/>
            <person name="Davis P."/>
            <person name="Feltwell T."/>
            <person name="Fraser A."/>
            <person name="Gentles S."/>
            <person name="Goble A."/>
            <person name="Hamlin N."/>
            <person name="Harris D.E."/>
            <person name="Hidalgo J."/>
            <person name="Hodgson G."/>
            <person name="Holroyd S."/>
            <person name="Hornsby T."/>
            <person name="Howarth S."/>
            <person name="Huckle E.J."/>
            <person name="Hunt S."/>
            <person name="Jagels K."/>
            <person name="James K.D."/>
            <person name="Jones L."/>
            <person name="Jones M."/>
            <person name="Leather S."/>
            <person name="McDonald S."/>
            <person name="McLean J."/>
            <person name="Mooney P."/>
            <person name="Moule S."/>
            <person name="Mungall K.L."/>
            <person name="Murphy L.D."/>
            <person name="Niblett D."/>
            <person name="Odell C."/>
            <person name="Oliver K."/>
            <person name="O'Neil S."/>
            <person name="Pearson D."/>
            <person name="Quail M.A."/>
            <person name="Rabbinowitsch E."/>
            <person name="Rutherford K.M."/>
            <person name="Rutter S."/>
            <person name="Saunders D."/>
            <person name="Seeger K."/>
            <person name="Sharp S."/>
            <person name="Skelton J."/>
            <person name="Simmonds M.N."/>
            <person name="Squares R."/>
            <person name="Squares S."/>
            <person name="Stevens K."/>
            <person name="Taylor K."/>
            <person name="Taylor R.G."/>
            <person name="Tivey A."/>
            <person name="Walsh S.V."/>
            <person name="Warren T."/>
            <person name="Whitehead S."/>
            <person name="Woodward J.R."/>
            <person name="Volckaert G."/>
            <person name="Aert R."/>
            <person name="Robben J."/>
            <person name="Grymonprez B."/>
            <person name="Weltjens I."/>
            <person name="Vanstreels E."/>
            <person name="Rieger M."/>
            <person name="Schaefer M."/>
            <person name="Mueller-Auer S."/>
            <person name="Gabel C."/>
            <person name="Fuchs M."/>
            <person name="Duesterhoeft A."/>
            <person name="Fritzc C."/>
            <person name="Holzer E."/>
            <person name="Moestl D."/>
            <person name="Hilbert H."/>
            <person name="Borzym K."/>
            <person name="Langer I."/>
            <person name="Beck A."/>
            <person name="Lehrach H."/>
            <person name="Reinhardt R."/>
            <person name="Pohl T.M."/>
            <person name="Eger P."/>
            <person name="Zimmermann W."/>
            <person name="Wedler H."/>
            <person name="Wambutt R."/>
            <person name="Purnelle B."/>
            <person name="Goffeau A."/>
            <person name="Cadieu E."/>
            <person name="Dreano S."/>
            <person name="Gloux S."/>
            <person name="Lelaure V."/>
            <person name="Mottier S."/>
            <person name="Galibert F."/>
            <person name="Aves S.J."/>
            <person name="Xiang Z."/>
            <person name="Hunt C."/>
            <person name="Moore K."/>
            <person name="Hurst S.M."/>
            <person name="Lucas M."/>
            <person name="Rochet M."/>
            <person name="Gaillardin C."/>
            <person name="Tallada V.A."/>
            <person name="Garzon A."/>
            <person name="Thode G."/>
            <person name="Daga R.R."/>
            <person name="Cruzado L."/>
            <person name="Jimenez J."/>
            <person name="Sanchez M."/>
            <person name="del Rey F."/>
            <person name="Benito J."/>
            <person name="Dominguez A."/>
            <person name="Revuelta J.L."/>
            <person name="Moreno S."/>
            <person name="Armstrong J."/>
            <person name="Forsburg S.L."/>
            <person name="Cerutti L."/>
            <person name="Lowe T."/>
            <person name="McCombie W.R."/>
            <person name="Paulsen I."/>
            <person name="Potashkin J."/>
            <person name="Shpakovski G.V."/>
            <person name="Ussery D."/>
            <person name="Barrell B.G."/>
            <person name="Nurse P."/>
        </authorList>
    </citation>
    <scope>NUCLEOTIDE SEQUENCE [LARGE SCALE GENOMIC DNA]</scope>
    <source>
        <strain>972 / ATCC 24843</strain>
    </source>
</reference>
<reference key="2">
    <citation type="submission" date="1997-02" db="EMBL/GenBank/DDBJ databases">
        <title>S.pombe ribosomal protein S16 homolog.</title>
        <authorList>
            <person name="Kawamukai M."/>
        </authorList>
    </citation>
    <scope>NUCLEOTIDE SEQUENCE [MRNA] OF 8-144</scope>
</reference>
<reference key="3">
    <citation type="journal article" date="2006" name="Nat. Biotechnol.">
        <title>ORFeome cloning and global analysis of protein localization in the fission yeast Schizosaccharomyces pombe.</title>
        <authorList>
            <person name="Matsuyama A."/>
            <person name="Arai R."/>
            <person name="Yashiroda Y."/>
            <person name="Shirai A."/>
            <person name="Kamata A."/>
            <person name="Sekido S."/>
            <person name="Kobayashi Y."/>
            <person name="Hashimoto A."/>
            <person name="Hamamoto M."/>
            <person name="Hiraoka Y."/>
            <person name="Horinouchi S."/>
            <person name="Yoshida M."/>
        </authorList>
    </citation>
    <scope>SUBCELLULAR LOCATION [LARGE SCALE ANALYSIS]</scope>
</reference>
<proteinExistence type="evidence at protein level"/>
<protein>
    <recommendedName>
        <fullName evidence="4">Small ribosomal subunit protein eS19A</fullName>
    </recommendedName>
    <alternativeName>
        <fullName>40S ribosomal protein S19-A</fullName>
    </alternativeName>
    <alternativeName>
        <fullName>S16-A</fullName>
    </alternativeName>
</protein>
<sequence length="144" mass="16150">MAGVSVKDVDAQKFITAYAAFLKRSGKMTTPQWIDIVKTGTHKELAPYDPDWYYVRAAAIARHIYLRKQVGVGRLCKVYGGSVNRGMRPSHHRDGSGSVQRKVVQSLEKIGVLEKSDNGGRRISQQGQRDLDRIAYSLLEEESE</sequence>
<feature type="chain" id="PRO_0000153833" description="Small ribosomal subunit protein eS19A">
    <location>
        <begin position="1"/>
        <end position="144"/>
    </location>
</feature>
<feature type="region of interest" description="Disordered" evidence="2">
    <location>
        <begin position="83"/>
        <end position="102"/>
    </location>
</feature>
<gene>
    <name type="primary">rps1901</name>
    <name type="synonym">rps19</name>
    <name type="synonym">rps19a</name>
    <name type="ORF">SPBC21C3.13</name>
</gene>
<organism>
    <name type="scientific">Schizosaccharomyces pombe (strain 972 / ATCC 24843)</name>
    <name type="common">Fission yeast</name>
    <dbReference type="NCBI Taxonomy" id="284812"/>
    <lineage>
        <taxon>Eukaryota</taxon>
        <taxon>Fungi</taxon>
        <taxon>Dikarya</taxon>
        <taxon>Ascomycota</taxon>
        <taxon>Taphrinomycotina</taxon>
        <taxon>Schizosaccharomycetes</taxon>
        <taxon>Schizosaccharomycetales</taxon>
        <taxon>Schizosaccharomycetaceae</taxon>
        <taxon>Schizosaccharomyces</taxon>
    </lineage>
</organism>
<accession>P58234</accession>
<dbReference type="EMBL" id="CU329671">
    <property type="protein sequence ID" value="CAB76049.1"/>
    <property type="molecule type" value="Genomic_DNA"/>
</dbReference>
<dbReference type="EMBL" id="AB000915">
    <property type="protein sequence ID" value="BAA19213.1"/>
    <property type="molecule type" value="mRNA"/>
</dbReference>
<dbReference type="PIR" id="T50357">
    <property type="entry name" value="T50357"/>
</dbReference>
<dbReference type="RefSeq" id="NP_596593.1">
    <property type="nucleotide sequence ID" value="NM_001022513.2"/>
</dbReference>
<dbReference type="PDB" id="9AXT">
    <property type="method" value="EM"/>
    <property type="resolution" value="2.40 A"/>
    <property type="chains" value="AW=1-144"/>
</dbReference>
<dbReference type="PDB" id="9AXV">
    <property type="method" value="EM"/>
    <property type="resolution" value="2.40 A"/>
    <property type="chains" value="AW=1-144"/>
</dbReference>
<dbReference type="PDBsum" id="9AXT"/>
<dbReference type="PDBsum" id="9AXV"/>
<dbReference type="EMDB" id="EMD-43972"/>
<dbReference type="EMDB" id="EMD-43976"/>
<dbReference type="SMR" id="P58234"/>
<dbReference type="BioGRID" id="276975">
    <property type="interactions" value="3"/>
</dbReference>
<dbReference type="FunCoup" id="P58234">
    <property type="interactions" value="478"/>
</dbReference>
<dbReference type="STRING" id="284812.P58234"/>
<dbReference type="iPTMnet" id="P58234"/>
<dbReference type="PaxDb" id="4896-SPBC21C3.13.1"/>
<dbReference type="EnsemblFungi" id="SPBC21C3.13.1">
    <property type="protein sequence ID" value="SPBC21C3.13.1:pep"/>
    <property type="gene ID" value="SPBC21C3.13"/>
</dbReference>
<dbReference type="GeneID" id="2540447"/>
<dbReference type="KEGG" id="spo:2540447"/>
<dbReference type="PomBase" id="SPBC21C3.13">
    <property type="gene designation" value="rps1901"/>
</dbReference>
<dbReference type="VEuPathDB" id="FungiDB:SPBC21C3.13"/>
<dbReference type="eggNOG" id="KOG3411">
    <property type="taxonomic scope" value="Eukaryota"/>
</dbReference>
<dbReference type="HOGENOM" id="CLU_108559_0_0_1"/>
<dbReference type="InParanoid" id="P58234"/>
<dbReference type="OMA" id="WAPFVKT"/>
<dbReference type="PhylomeDB" id="P58234"/>
<dbReference type="Reactome" id="R-SPO-156827">
    <property type="pathway name" value="L13a-mediated translational silencing of Ceruloplasmin expression"/>
</dbReference>
<dbReference type="Reactome" id="R-SPO-1799339">
    <property type="pathway name" value="SRP-dependent cotranslational protein targeting to membrane"/>
</dbReference>
<dbReference type="Reactome" id="R-SPO-72649">
    <property type="pathway name" value="Translation initiation complex formation"/>
</dbReference>
<dbReference type="Reactome" id="R-SPO-72689">
    <property type="pathway name" value="Formation of a pool of free 40S subunits"/>
</dbReference>
<dbReference type="Reactome" id="R-SPO-72695">
    <property type="pathway name" value="Formation of the ternary complex, and subsequently, the 43S complex"/>
</dbReference>
<dbReference type="Reactome" id="R-SPO-72702">
    <property type="pathway name" value="Ribosomal scanning and start codon recognition"/>
</dbReference>
<dbReference type="Reactome" id="R-SPO-72706">
    <property type="pathway name" value="GTP hydrolysis and joining of the 60S ribosomal subunit"/>
</dbReference>
<dbReference type="Reactome" id="R-SPO-975956">
    <property type="pathway name" value="Nonsense Mediated Decay (NMD) independent of the Exon Junction Complex (EJC)"/>
</dbReference>
<dbReference type="Reactome" id="R-SPO-975957">
    <property type="pathway name" value="Nonsense Mediated Decay (NMD) enhanced by the Exon Junction Complex (EJC)"/>
</dbReference>
<dbReference type="PRO" id="PR:P58234"/>
<dbReference type="Proteomes" id="UP000002485">
    <property type="component" value="Chromosome II"/>
</dbReference>
<dbReference type="GO" id="GO:0005829">
    <property type="term" value="C:cytosol"/>
    <property type="evidence" value="ECO:0007005"/>
    <property type="project" value="PomBase"/>
</dbReference>
<dbReference type="GO" id="GO:0022627">
    <property type="term" value="C:cytosolic small ribosomal subunit"/>
    <property type="evidence" value="ECO:0000269"/>
    <property type="project" value="PomBase"/>
</dbReference>
<dbReference type="GO" id="GO:0005730">
    <property type="term" value="C:nucleolus"/>
    <property type="evidence" value="ECO:0007005"/>
    <property type="project" value="PomBase"/>
</dbReference>
<dbReference type="GO" id="GO:0005634">
    <property type="term" value="C:nucleus"/>
    <property type="evidence" value="ECO:0007005"/>
    <property type="project" value="PomBase"/>
</dbReference>
<dbReference type="GO" id="GO:0003723">
    <property type="term" value="F:RNA binding"/>
    <property type="evidence" value="ECO:0000318"/>
    <property type="project" value="GO_Central"/>
</dbReference>
<dbReference type="GO" id="GO:0003735">
    <property type="term" value="F:structural constituent of ribosome"/>
    <property type="evidence" value="ECO:0000318"/>
    <property type="project" value="GO_Central"/>
</dbReference>
<dbReference type="GO" id="GO:0002181">
    <property type="term" value="P:cytoplasmic translation"/>
    <property type="evidence" value="ECO:0000266"/>
    <property type="project" value="PomBase"/>
</dbReference>
<dbReference type="GO" id="GO:0000028">
    <property type="term" value="P:ribosomal small subunit assembly"/>
    <property type="evidence" value="ECO:0000318"/>
    <property type="project" value="GO_Central"/>
</dbReference>
<dbReference type="FunFam" id="1.10.10.10:FF:000118">
    <property type="entry name" value="40S ribosomal protein S19"/>
    <property type="match status" value="1"/>
</dbReference>
<dbReference type="Gene3D" id="1.10.10.10">
    <property type="entry name" value="Winged helix-like DNA-binding domain superfamily/Winged helix DNA-binding domain"/>
    <property type="match status" value="1"/>
</dbReference>
<dbReference type="InterPro" id="IPR001266">
    <property type="entry name" value="Ribosomal_eS19"/>
</dbReference>
<dbReference type="InterPro" id="IPR018277">
    <property type="entry name" value="Ribosomal_eS19_CS"/>
</dbReference>
<dbReference type="InterPro" id="IPR036388">
    <property type="entry name" value="WH-like_DNA-bd_sf"/>
</dbReference>
<dbReference type="InterPro" id="IPR036390">
    <property type="entry name" value="WH_DNA-bd_sf"/>
</dbReference>
<dbReference type="PANTHER" id="PTHR11710">
    <property type="entry name" value="40S RIBOSOMAL PROTEIN S19"/>
    <property type="match status" value="1"/>
</dbReference>
<dbReference type="PANTHER" id="PTHR11710:SF0">
    <property type="entry name" value="40S RIBOSOMAL PROTEIN S19"/>
    <property type="match status" value="1"/>
</dbReference>
<dbReference type="Pfam" id="PF01090">
    <property type="entry name" value="Ribosomal_S19e"/>
    <property type="match status" value="1"/>
</dbReference>
<dbReference type="SMART" id="SM01413">
    <property type="entry name" value="Ribosomal_S19e"/>
    <property type="match status" value="1"/>
</dbReference>
<dbReference type="SUPFAM" id="SSF46785">
    <property type="entry name" value="Winged helix' DNA-binding domain"/>
    <property type="match status" value="1"/>
</dbReference>
<dbReference type="PROSITE" id="PS00628">
    <property type="entry name" value="RIBOSOMAL_S19E"/>
    <property type="match status" value="1"/>
</dbReference>